<keyword id="KW-0966">Cell projection</keyword>
<keyword id="KW-0175">Coiled coil</keyword>
<keyword id="KW-0963">Cytoplasm</keyword>
<keyword id="KW-0333">Golgi apparatus</keyword>
<keyword id="KW-0449">Lipoprotein</keyword>
<keyword id="KW-0564">Palmitate</keyword>
<keyword id="KW-0597">Phosphoprotein</keyword>
<keyword id="KW-1185">Reference proteome</keyword>
<feature type="chain" id="PRO_0000182403" description="Stathmin-3">
    <location>
        <begin position="1"/>
        <end position="180"/>
    </location>
</feature>
<feature type="domain" description="SLD" evidence="4">
    <location>
        <begin position="38"/>
        <end position="180"/>
    </location>
</feature>
<feature type="region of interest" description="Disordered" evidence="5">
    <location>
        <begin position="60"/>
        <end position="81"/>
    </location>
</feature>
<feature type="coiled-coil region" evidence="3">
    <location>
        <begin position="75"/>
        <end position="179"/>
    </location>
</feature>
<feature type="compositionally biased region" description="Low complexity" evidence="5">
    <location>
        <begin position="60"/>
        <end position="74"/>
    </location>
</feature>
<feature type="modified residue" description="Phosphoserine" evidence="9">
    <location>
        <position position="50"/>
    </location>
</feature>
<feature type="modified residue" description="Phosphoserine" evidence="9">
    <location>
        <position position="60"/>
    </location>
</feature>
<feature type="modified residue" description="Phosphoserine" evidence="8 9">
    <location>
        <position position="65"/>
    </location>
</feature>
<feature type="modified residue" description="Phosphoserine" evidence="8 9">
    <location>
        <position position="68"/>
    </location>
</feature>
<feature type="modified residue" description="Phosphoserine" evidence="9">
    <location>
        <position position="72"/>
    </location>
</feature>
<feature type="modified residue" description="Phosphoserine" evidence="9">
    <location>
        <position position="73"/>
    </location>
</feature>
<feature type="modified residue" description="Phosphoserine" evidence="2">
    <location>
        <position position="81"/>
    </location>
</feature>
<feature type="lipid moiety-binding region" description="S-palmitoyl cysteine" evidence="1">
    <location>
        <position position="22"/>
    </location>
</feature>
<feature type="lipid moiety-binding region" description="S-palmitoyl cysteine" evidence="1">
    <location>
        <position position="24"/>
    </location>
</feature>
<sequence>MASTVSAYKEKMKELSVLSLICSCFYSQPHPNTIYQYGDMEVKQLDKRASGQSFEVILKSPSDLSPESPVLSSPPKRKDASLEELQKRLEAAEERRKTQEAQVLKQLAERREHEREVLHKALEENNNFSRLAEEKLNYKMELSKEIREAHLAALRERLREKELHAAEVRRNKEQREEMSG</sequence>
<comment type="function">
    <text evidence="6">Exhibits microtubule-destabilizing activity, which is antagonized by STAT3.</text>
</comment>
<comment type="subunit">
    <text evidence="2 6">Interacts with STAT3. Interacts with CLU (secreted form); this interaction may act as an important modulator during neuronal differentiation (By similarity).</text>
</comment>
<comment type="subcellular location">
    <subcellularLocation>
        <location>Golgi apparatus</location>
    </subcellularLocation>
    <subcellularLocation>
        <location>Cell projection</location>
        <location>Growth cone</location>
    </subcellularLocation>
    <subcellularLocation>
        <location>Cell projection</location>
        <location>Axon</location>
    </subcellularLocation>
    <subcellularLocation>
        <location evidence="2">Cytoplasm</location>
        <location evidence="2">Cytosol</location>
    </subcellularLocation>
</comment>
<comment type="tissue specificity">
    <text>Neuron specific.</text>
</comment>
<comment type="PTM">
    <text evidence="1">N-terminal palmitoylation promotes specific anchoring to the cytosolic leaflet of Golgi membranes and subsequent vesicular trafficking along dendrites and axons. Neuronal Stathmins are substrates for palmitoyltransferases ZDHHC3, ZDHHC7 and ZDHHC15 (By similarity).</text>
</comment>
<comment type="similarity">
    <text evidence="7">Belongs to the stathmin family.</text>
</comment>
<proteinExistence type="evidence at protein level"/>
<name>STMN3_MOUSE</name>
<dbReference type="EMBL" id="AB007912">
    <property type="protein sequence ID" value="BAA28629.1"/>
    <property type="molecule type" value="mRNA"/>
</dbReference>
<dbReference type="EMBL" id="AF069708">
    <property type="protein sequence ID" value="AAC21575.1"/>
    <property type="molecule type" value="mRNA"/>
</dbReference>
<dbReference type="EMBL" id="BC057017">
    <property type="protein sequence ID" value="AAH57017.1"/>
    <property type="molecule type" value="mRNA"/>
</dbReference>
<dbReference type="CCDS" id="CCDS17207.1"/>
<dbReference type="RefSeq" id="NP_033159.1">
    <property type="nucleotide sequence ID" value="NM_009133.3"/>
</dbReference>
<dbReference type="SMR" id="O70166"/>
<dbReference type="BioGRID" id="203096">
    <property type="interactions" value="13"/>
</dbReference>
<dbReference type="FunCoup" id="O70166">
    <property type="interactions" value="232"/>
</dbReference>
<dbReference type="IntAct" id="O70166">
    <property type="interactions" value="1"/>
</dbReference>
<dbReference type="STRING" id="10090.ENSMUSP00000099334"/>
<dbReference type="GlyGen" id="O70166">
    <property type="glycosylation" value="1 site, 1 N-linked glycan (1 site)"/>
</dbReference>
<dbReference type="iPTMnet" id="O70166"/>
<dbReference type="PhosphoSitePlus" id="O70166"/>
<dbReference type="SwissPalm" id="O70166"/>
<dbReference type="PaxDb" id="10090-ENSMUSP00000099334"/>
<dbReference type="PeptideAtlas" id="O70166"/>
<dbReference type="ProteomicsDB" id="258765"/>
<dbReference type="Antibodypedia" id="29816">
    <property type="antibodies" value="184 antibodies from 29 providers"/>
</dbReference>
<dbReference type="Ensembl" id="ENSMUST00000103045.4">
    <property type="protein sequence ID" value="ENSMUSP00000099334.4"/>
    <property type="gene ID" value="ENSMUSG00000027581.13"/>
</dbReference>
<dbReference type="GeneID" id="20262"/>
<dbReference type="KEGG" id="mmu:20262"/>
<dbReference type="UCSC" id="uc008olt.1">
    <property type="organism name" value="mouse"/>
</dbReference>
<dbReference type="AGR" id="MGI:1277137"/>
<dbReference type="CTD" id="50861"/>
<dbReference type="MGI" id="MGI:1277137">
    <property type="gene designation" value="Stmn3"/>
</dbReference>
<dbReference type="VEuPathDB" id="HostDB:ENSMUSG00000027581"/>
<dbReference type="eggNOG" id="KOG1280">
    <property type="taxonomic scope" value="Eukaryota"/>
</dbReference>
<dbReference type="GeneTree" id="ENSGT01030000234597"/>
<dbReference type="HOGENOM" id="CLU_102026_0_0_1"/>
<dbReference type="InParanoid" id="O70166"/>
<dbReference type="OMA" id="MPTAYKE"/>
<dbReference type="OrthoDB" id="5986631at2759"/>
<dbReference type="PhylomeDB" id="O70166"/>
<dbReference type="TreeFam" id="TF326935"/>
<dbReference type="BioGRID-ORCS" id="20262">
    <property type="hits" value="3 hits in 76 CRISPR screens"/>
</dbReference>
<dbReference type="ChiTaRS" id="Stmn3">
    <property type="organism name" value="mouse"/>
</dbReference>
<dbReference type="PRO" id="PR:O70166"/>
<dbReference type="Proteomes" id="UP000000589">
    <property type="component" value="Chromosome 2"/>
</dbReference>
<dbReference type="RNAct" id="O70166">
    <property type="molecule type" value="protein"/>
</dbReference>
<dbReference type="Bgee" id="ENSMUSG00000027581">
    <property type="expression patterns" value="Expressed in facial nucleus and 251 other cell types or tissues"/>
</dbReference>
<dbReference type="ExpressionAtlas" id="O70166">
    <property type="expression patterns" value="baseline and differential"/>
</dbReference>
<dbReference type="GO" id="GO:0005737">
    <property type="term" value="C:cytoplasm"/>
    <property type="evidence" value="ECO:0000314"/>
    <property type="project" value="HGNC-UCL"/>
</dbReference>
<dbReference type="GO" id="GO:0005829">
    <property type="term" value="C:cytosol"/>
    <property type="evidence" value="ECO:0000250"/>
    <property type="project" value="UniProtKB"/>
</dbReference>
<dbReference type="GO" id="GO:0005794">
    <property type="term" value="C:Golgi apparatus"/>
    <property type="evidence" value="ECO:0007669"/>
    <property type="project" value="UniProtKB-SubCell"/>
</dbReference>
<dbReference type="GO" id="GO:0030426">
    <property type="term" value="C:growth cone"/>
    <property type="evidence" value="ECO:0007669"/>
    <property type="project" value="UniProtKB-SubCell"/>
</dbReference>
<dbReference type="GO" id="GO:0019904">
    <property type="term" value="F:protein domain specific binding"/>
    <property type="evidence" value="ECO:0000353"/>
    <property type="project" value="HGNC-UCL"/>
</dbReference>
<dbReference type="GO" id="GO:0001835">
    <property type="term" value="P:blastocyst hatching"/>
    <property type="evidence" value="ECO:0000315"/>
    <property type="project" value="MGI"/>
</dbReference>
<dbReference type="GO" id="GO:0031122">
    <property type="term" value="P:cytoplasmic microtubule organization"/>
    <property type="evidence" value="ECO:0000314"/>
    <property type="project" value="HGNC-UCL"/>
</dbReference>
<dbReference type="GO" id="GO:0010977">
    <property type="term" value="P:negative regulation of neuron projection development"/>
    <property type="evidence" value="ECO:0000314"/>
    <property type="project" value="HGNC-UCL"/>
</dbReference>
<dbReference type="GO" id="GO:0035021">
    <property type="term" value="P:negative regulation of Rac protein signal transduction"/>
    <property type="evidence" value="ECO:0000314"/>
    <property type="project" value="HGNC-UCL"/>
</dbReference>
<dbReference type="GO" id="GO:0051493">
    <property type="term" value="P:regulation of cytoskeleton organization"/>
    <property type="evidence" value="ECO:0000314"/>
    <property type="project" value="HGNC-UCL"/>
</dbReference>
<dbReference type="GO" id="GO:0031110">
    <property type="term" value="P:regulation of microtubule polymerization or depolymerization"/>
    <property type="evidence" value="ECO:0007669"/>
    <property type="project" value="InterPro"/>
</dbReference>
<dbReference type="Gene3D" id="6.10.280.30">
    <property type="match status" value="1"/>
</dbReference>
<dbReference type="InterPro" id="IPR030514">
    <property type="entry name" value="Stathmin_CS"/>
</dbReference>
<dbReference type="InterPro" id="IPR000956">
    <property type="entry name" value="Stathmin_fam"/>
</dbReference>
<dbReference type="InterPro" id="IPR036002">
    <property type="entry name" value="Stathmin_sf"/>
</dbReference>
<dbReference type="PANTHER" id="PTHR10104">
    <property type="entry name" value="STATHMIN"/>
    <property type="match status" value="1"/>
</dbReference>
<dbReference type="PANTHER" id="PTHR10104:SF17">
    <property type="entry name" value="STATHMIN-3"/>
    <property type="match status" value="1"/>
</dbReference>
<dbReference type="Pfam" id="PF00836">
    <property type="entry name" value="Stathmin"/>
    <property type="match status" value="1"/>
</dbReference>
<dbReference type="PIRSF" id="PIRSF002285">
    <property type="entry name" value="Stathmin"/>
    <property type="match status" value="1"/>
</dbReference>
<dbReference type="PRINTS" id="PR00345">
    <property type="entry name" value="STATHMIN"/>
</dbReference>
<dbReference type="SUPFAM" id="SSF101494">
    <property type="entry name" value="Stathmin"/>
    <property type="match status" value="1"/>
</dbReference>
<dbReference type="PROSITE" id="PS00563">
    <property type="entry name" value="STATHMIN_1"/>
    <property type="match status" value="1"/>
</dbReference>
<dbReference type="PROSITE" id="PS01041">
    <property type="entry name" value="STATHMIN_2"/>
    <property type="match status" value="1"/>
</dbReference>
<dbReference type="PROSITE" id="PS51663">
    <property type="entry name" value="STATHMIN_3"/>
    <property type="match status" value="1"/>
</dbReference>
<organism>
    <name type="scientific">Mus musculus</name>
    <name type="common">Mouse</name>
    <dbReference type="NCBI Taxonomy" id="10090"/>
    <lineage>
        <taxon>Eukaryota</taxon>
        <taxon>Metazoa</taxon>
        <taxon>Chordata</taxon>
        <taxon>Craniata</taxon>
        <taxon>Vertebrata</taxon>
        <taxon>Euteleostomi</taxon>
        <taxon>Mammalia</taxon>
        <taxon>Eutheria</taxon>
        <taxon>Euarchontoglires</taxon>
        <taxon>Glires</taxon>
        <taxon>Rodentia</taxon>
        <taxon>Myomorpha</taxon>
        <taxon>Muroidea</taxon>
        <taxon>Muridae</taxon>
        <taxon>Murinae</taxon>
        <taxon>Mus</taxon>
        <taxon>Mus</taxon>
    </lineage>
</organism>
<protein>
    <recommendedName>
        <fullName>Stathmin-3</fullName>
    </recommendedName>
    <alternativeName>
        <fullName>Hippocampus abundant transcript 3</fullName>
    </alternativeName>
    <alternativeName>
        <fullName>SCG10-like protein</fullName>
    </alternativeName>
    <alternativeName>
        <fullName>SCG10-related protein HiAT3</fullName>
    </alternativeName>
</protein>
<reference key="1">
    <citation type="journal article" date="1998" name="Gene">
        <title>A novel SCG10-related gene uniquely expressed in the nervous system.</title>
        <authorList>
            <person name="Matsuo N."/>
            <person name="Kawamoto S."/>
            <person name="Matsubara K."/>
            <person name="Okubo K."/>
        </authorList>
    </citation>
    <scope>NUCLEOTIDE SEQUENCE [MRNA]</scope>
    <source>
        <strain>C57BL/6J</strain>
        <tissue>Hippocampus</tissue>
    </source>
</reference>
<reference key="2">
    <citation type="journal article" date="1998" name="J. Neurochem.">
        <title>SCLIP: a novel SCG10-like protein of the stathmin family expressed in the nervous system.</title>
        <authorList>
            <person name="Ozon S."/>
            <person name="Byk T."/>
            <person name="Sobel A."/>
        </authorList>
    </citation>
    <scope>NUCLEOTIDE SEQUENCE [MRNA]</scope>
</reference>
<reference key="3">
    <citation type="journal article" date="2004" name="Genome Res.">
        <title>The status, quality, and expansion of the NIH full-length cDNA project: the Mammalian Gene Collection (MGC).</title>
        <authorList>
            <consortium name="The MGC Project Team"/>
        </authorList>
    </citation>
    <scope>NUCLEOTIDE SEQUENCE [LARGE SCALE MRNA]</scope>
    <source>
        <strain>C57BL/6J</strain>
        <tissue>Brain</tissue>
    </source>
</reference>
<reference key="4">
    <citation type="journal article" date="2004" name="Mol. Cell. Proteomics">
        <title>Phosphoproteomic analysis of the developing mouse brain.</title>
        <authorList>
            <person name="Ballif B.A."/>
            <person name="Villen J."/>
            <person name="Beausoleil S.A."/>
            <person name="Schwartz D."/>
            <person name="Gygi S.P."/>
        </authorList>
    </citation>
    <scope>PHOSPHORYLATION [LARGE SCALE ANALYSIS] AT SER-65 AND SER-68</scope>
    <scope>IDENTIFICATION BY MASS SPECTROMETRY [LARGE SCALE ANALYSIS]</scope>
    <source>
        <tissue>Embryonic brain</tissue>
    </source>
</reference>
<reference key="5">
    <citation type="journal article" date="2006" name="J. Cell Biol.">
        <title>Stat3 regulates microtubules by antagonizing the depolymerization activity of stathmin.</title>
        <authorList>
            <person name="Ng D.C."/>
            <person name="Lin B.H."/>
            <person name="Lim C.P."/>
            <person name="Huang G."/>
            <person name="Zhang T."/>
            <person name="Poli V."/>
            <person name="Cao X."/>
        </authorList>
    </citation>
    <scope>FUNCTION</scope>
    <scope>INTERACTION WITH STAT3</scope>
</reference>
<reference key="6">
    <citation type="journal article" date="2010" name="Cell">
        <title>A tissue-specific atlas of mouse protein phosphorylation and expression.</title>
        <authorList>
            <person name="Huttlin E.L."/>
            <person name="Jedrychowski M.P."/>
            <person name="Elias J.E."/>
            <person name="Goswami T."/>
            <person name="Rad R."/>
            <person name="Beausoleil S.A."/>
            <person name="Villen J."/>
            <person name="Haas W."/>
            <person name="Sowa M.E."/>
            <person name="Gygi S.P."/>
        </authorList>
    </citation>
    <scope>PHOSPHORYLATION [LARGE SCALE ANALYSIS] AT SER-50; SER-60; SER-65; SER-68; SER-72 AND SER-73</scope>
    <scope>IDENTIFICATION BY MASS SPECTROMETRY [LARGE SCALE ANALYSIS]</scope>
    <source>
        <tissue>Brain</tissue>
    </source>
</reference>
<accession>O70166</accession>
<evidence type="ECO:0000250" key="1"/>
<evidence type="ECO:0000250" key="2">
    <source>
        <dbReference type="UniProtKB" id="Q9JHU6"/>
    </source>
</evidence>
<evidence type="ECO:0000255" key="3"/>
<evidence type="ECO:0000255" key="4">
    <source>
        <dbReference type="PROSITE-ProRule" id="PRU00998"/>
    </source>
</evidence>
<evidence type="ECO:0000256" key="5">
    <source>
        <dbReference type="SAM" id="MobiDB-lite"/>
    </source>
</evidence>
<evidence type="ECO:0000269" key="6">
    <source>
    </source>
</evidence>
<evidence type="ECO:0000305" key="7"/>
<evidence type="ECO:0007744" key="8">
    <source>
    </source>
</evidence>
<evidence type="ECO:0007744" key="9">
    <source>
    </source>
</evidence>
<gene>
    <name type="primary">Stmn3</name>
    <name type="synonym">Sclip</name>
</gene>